<reference key="1">
    <citation type="journal article" date="2002" name="Proc. Natl. Acad. Sci. U.S.A.">
        <title>The genome sequence of Bifidobacterium longum reflects its adaptation to the human gastrointestinal tract.</title>
        <authorList>
            <person name="Schell M.A."/>
            <person name="Karmirantzou M."/>
            <person name="Snel B."/>
            <person name="Vilanova D."/>
            <person name="Berger B."/>
            <person name="Pessi G."/>
            <person name="Zwahlen M.-C."/>
            <person name="Desiere F."/>
            <person name="Bork P."/>
            <person name="Delley M."/>
            <person name="Pridmore R.D."/>
            <person name="Arigoni F."/>
        </authorList>
    </citation>
    <scope>NUCLEOTIDE SEQUENCE [LARGE SCALE GENOMIC DNA]</scope>
    <source>
        <strain>NCC 2705</strain>
    </source>
</reference>
<name>LEXA_BIFLO</name>
<feature type="chain" id="PRO_0000170013" description="LexA repressor">
    <location>
        <begin position="1"/>
        <end position="241"/>
    </location>
</feature>
<feature type="DNA-binding region" description="H-T-H motif" evidence="1">
    <location>
        <begin position="41"/>
        <end position="61"/>
    </location>
</feature>
<feature type="active site" description="For autocatalytic cleavage activity" evidence="1">
    <location>
        <position position="165"/>
    </location>
</feature>
<feature type="active site" description="For autocatalytic cleavage activity" evidence="1">
    <location>
        <position position="202"/>
    </location>
</feature>
<feature type="site" description="Cleavage; by autolysis" evidence="1">
    <location>
        <begin position="130"/>
        <end position="131"/>
    </location>
</feature>
<organism>
    <name type="scientific">Bifidobacterium longum (strain NCC 2705)</name>
    <dbReference type="NCBI Taxonomy" id="206672"/>
    <lineage>
        <taxon>Bacteria</taxon>
        <taxon>Bacillati</taxon>
        <taxon>Actinomycetota</taxon>
        <taxon>Actinomycetes</taxon>
        <taxon>Bifidobacteriales</taxon>
        <taxon>Bifidobacteriaceae</taxon>
        <taxon>Bifidobacterium</taxon>
    </lineage>
</organism>
<dbReference type="EC" id="3.4.21.88" evidence="1"/>
<dbReference type="EMBL" id="AE014295">
    <property type="protein sequence ID" value="AAN25110.1"/>
    <property type="molecule type" value="Genomic_DNA"/>
</dbReference>
<dbReference type="RefSeq" id="NP_696474.1">
    <property type="nucleotide sequence ID" value="NC_004307.2"/>
</dbReference>
<dbReference type="RefSeq" id="WP_007052535.1">
    <property type="nucleotide sequence ID" value="NC_004307.2"/>
</dbReference>
<dbReference type="SMR" id="Q8G4R6"/>
<dbReference type="STRING" id="206672.BL1310"/>
<dbReference type="MEROPS" id="S24.001"/>
<dbReference type="EnsemblBacteria" id="AAN25110">
    <property type="protein sequence ID" value="AAN25110"/>
    <property type="gene ID" value="BL1310"/>
</dbReference>
<dbReference type="GeneID" id="69578507"/>
<dbReference type="KEGG" id="blo:BL1310"/>
<dbReference type="PATRIC" id="fig|206672.9.peg.160"/>
<dbReference type="HOGENOM" id="CLU_066192_45_0_11"/>
<dbReference type="OrthoDB" id="9802364at2"/>
<dbReference type="PhylomeDB" id="Q8G4R6"/>
<dbReference type="Proteomes" id="UP000000439">
    <property type="component" value="Chromosome"/>
</dbReference>
<dbReference type="GO" id="GO:0003677">
    <property type="term" value="F:DNA binding"/>
    <property type="evidence" value="ECO:0007669"/>
    <property type="project" value="UniProtKB-UniRule"/>
</dbReference>
<dbReference type="GO" id="GO:0004252">
    <property type="term" value="F:serine-type endopeptidase activity"/>
    <property type="evidence" value="ECO:0007669"/>
    <property type="project" value="UniProtKB-UniRule"/>
</dbReference>
<dbReference type="GO" id="GO:0006281">
    <property type="term" value="P:DNA repair"/>
    <property type="evidence" value="ECO:0007669"/>
    <property type="project" value="UniProtKB-UniRule"/>
</dbReference>
<dbReference type="GO" id="GO:0006260">
    <property type="term" value="P:DNA replication"/>
    <property type="evidence" value="ECO:0007669"/>
    <property type="project" value="UniProtKB-UniRule"/>
</dbReference>
<dbReference type="GO" id="GO:0045892">
    <property type="term" value="P:negative regulation of DNA-templated transcription"/>
    <property type="evidence" value="ECO:0007669"/>
    <property type="project" value="UniProtKB-UniRule"/>
</dbReference>
<dbReference type="GO" id="GO:0006508">
    <property type="term" value="P:proteolysis"/>
    <property type="evidence" value="ECO:0007669"/>
    <property type="project" value="InterPro"/>
</dbReference>
<dbReference type="GO" id="GO:0009432">
    <property type="term" value="P:SOS response"/>
    <property type="evidence" value="ECO:0007669"/>
    <property type="project" value="UniProtKB-UniRule"/>
</dbReference>
<dbReference type="CDD" id="cd06529">
    <property type="entry name" value="S24_LexA-like"/>
    <property type="match status" value="1"/>
</dbReference>
<dbReference type="FunFam" id="1.10.10.10:FF:000009">
    <property type="entry name" value="LexA repressor"/>
    <property type="match status" value="1"/>
</dbReference>
<dbReference type="FunFam" id="2.10.109.10:FF:000001">
    <property type="entry name" value="LexA repressor"/>
    <property type="match status" value="1"/>
</dbReference>
<dbReference type="Gene3D" id="2.10.109.10">
    <property type="entry name" value="Umud Fragment, subunit A"/>
    <property type="match status" value="1"/>
</dbReference>
<dbReference type="Gene3D" id="1.10.10.10">
    <property type="entry name" value="Winged helix-like DNA-binding domain superfamily/Winged helix DNA-binding domain"/>
    <property type="match status" value="1"/>
</dbReference>
<dbReference type="HAMAP" id="MF_00015">
    <property type="entry name" value="LexA"/>
    <property type="match status" value="1"/>
</dbReference>
<dbReference type="InterPro" id="IPR006200">
    <property type="entry name" value="LexA"/>
</dbReference>
<dbReference type="InterPro" id="IPR039418">
    <property type="entry name" value="LexA-like"/>
</dbReference>
<dbReference type="InterPro" id="IPR036286">
    <property type="entry name" value="LexA/Signal_pep-like_sf"/>
</dbReference>
<dbReference type="InterPro" id="IPR006199">
    <property type="entry name" value="LexA_DNA-bd_dom"/>
</dbReference>
<dbReference type="InterPro" id="IPR050077">
    <property type="entry name" value="LexA_repressor"/>
</dbReference>
<dbReference type="InterPro" id="IPR006197">
    <property type="entry name" value="Peptidase_S24_LexA"/>
</dbReference>
<dbReference type="InterPro" id="IPR015927">
    <property type="entry name" value="Peptidase_S24_S26A/B/C"/>
</dbReference>
<dbReference type="InterPro" id="IPR036388">
    <property type="entry name" value="WH-like_DNA-bd_sf"/>
</dbReference>
<dbReference type="InterPro" id="IPR036390">
    <property type="entry name" value="WH_DNA-bd_sf"/>
</dbReference>
<dbReference type="NCBIfam" id="TIGR00498">
    <property type="entry name" value="lexA"/>
    <property type="match status" value="1"/>
</dbReference>
<dbReference type="PANTHER" id="PTHR33516">
    <property type="entry name" value="LEXA REPRESSOR"/>
    <property type="match status" value="1"/>
</dbReference>
<dbReference type="PANTHER" id="PTHR33516:SF2">
    <property type="entry name" value="LEXA REPRESSOR-RELATED"/>
    <property type="match status" value="1"/>
</dbReference>
<dbReference type="Pfam" id="PF01726">
    <property type="entry name" value="LexA_DNA_bind"/>
    <property type="match status" value="1"/>
</dbReference>
<dbReference type="Pfam" id="PF00717">
    <property type="entry name" value="Peptidase_S24"/>
    <property type="match status" value="1"/>
</dbReference>
<dbReference type="PRINTS" id="PR00726">
    <property type="entry name" value="LEXASERPTASE"/>
</dbReference>
<dbReference type="SUPFAM" id="SSF51306">
    <property type="entry name" value="LexA/Signal peptidase"/>
    <property type="match status" value="1"/>
</dbReference>
<dbReference type="SUPFAM" id="SSF46785">
    <property type="entry name" value="Winged helix' DNA-binding domain"/>
    <property type="match status" value="1"/>
</dbReference>
<evidence type="ECO:0000255" key="1">
    <source>
        <dbReference type="HAMAP-Rule" id="MF_00015"/>
    </source>
</evidence>
<gene>
    <name evidence="1" type="primary">lexA</name>
    <name type="ordered locus">BL1310</name>
</gene>
<protein>
    <recommendedName>
        <fullName evidence="1">LexA repressor</fullName>
        <ecNumber evidence="1">3.4.21.88</ecNumber>
    </recommendedName>
</protein>
<proteinExistence type="inferred from homology"/>
<keyword id="KW-0068">Autocatalytic cleavage</keyword>
<keyword id="KW-0227">DNA damage</keyword>
<keyword id="KW-0234">DNA repair</keyword>
<keyword id="KW-0235">DNA replication</keyword>
<keyword id="KW-0238">DNA-binding</keyword>
<keyword id="KW-0378">Hydrolase</keyword>
<keyword id="KW-1185">Reference proteome</keyword>
<keyword id="KW-0678">Repressor</keyword>
<keyword id="KW-0742">SOS response</keyword>
<keyword id="KW-0804">Transcription</keyword>
<keyword id="KW-0805">Transcription regulation</keyword>
<comment type="function">
    <text evidence="1">Represses a number of genes involved in the response to DNA damage (SOS response), including recA and lexA. In the presence of single-stranded DNA, RecA interacts with LexA causing an autocatalytic cleavage which disrupts the DNA-binding part of LexA, leading to derepression of the SOS regulon and eventually DNA repair.</text>
</comment>
<comment type="catalytic activity">
    <reaction evidence="1">
        <text>Hydrolysis of Ala-|-Gly bond in repressor LexA.</text>
        <dbReference type="EC" id="3.4.21.88"/>
    </reaction>
</comment>
<comment type="subunit">
    <text evidence="1">Homodimer.</text>
</comment>
<comment type="similarity">
    <text evidence="1">Belongs to the peptidase S24 family.</text>
</comment>
<accession>Q8G4R6</accession>
<sequence length="241" mass="26049">MSTIPFSPKQKPDESTLTDRQRKVLDAIRTHIDEQGFAPSFREIGNAAGLKSPSSVKHQLQVLEDKGFIRMNANKGRAIEVVAGSAPNAEKPSQASEEATSTSNVAEIYQFPAEAIAESHDVPLVGRIAAGVPITAEQHVDDVMRLPERLTGSGTLFMLEVHGDSMVDAAICDGDYVVVREQNSAVNGDIVAALLDDEATVKTFRKENGHVWLMPHNPAYSPIDGTHATIMGKVVTVLRKL</sequence>